<evidence type="ECO:0000255" key="1">
    <source>
        <dbReference type="HAMAP-Rule" id="MF_00008"/>
    </source>
</evidence>
<comment type="function">
    <text evidence="1">Catalyzes the reductive methylation of 2'-deoxyuridine-5'-monophosphate (dUMP) to 2'-deoxythymidine-5'-monophosphate (dTMP) while utilizing 5,10-methylenetetrahydrofolate (mTHF) as the methyl donor and reductant in the reaction, yielding dihydrofolate (DHF) as a by-product. This enzymatic reaction provides an intracellular de novo source of dTMP, an essential precursor for DNA biosynthesis.</text>
</comment>
<comment type="catalytic activity">
    <reaction evidence="1">
        <text>dUMP + (6R)-5,10-methylene-5,6,7,8-tetrahydrofolate = 7,8-dihydrofolate + dTMP</text>
        <dbReference type="Rhea" id="RHEA:12104"/>
        <dbReference type="ChEBI" id="CHEBI:15636"/>
        <dbReference type="ChEBI" id="CHEBI:57451"/>
        <dbReference type="ChEBI" id="CHEBI:63528"/>
        <dbReference type="ChEBI" id="CHEBI:246422"/>
        <dbReference type="EC" id="2.1.1.45"/>
    </reaction>
</comment>
<comment type="pathway">
    <text evidence="1">Pyrimidine metabolism; dTTP biosynthesis.</text>
</comment>
<comment type="subunit">
    <text evidence="1">Homodimer.</text>
</comment>
<comment type="subcellular location">
    <subcellularLocation>
        <location evidence="1">Cytoplasm</location>
    </subcellularLocation>
</comment>
<comment type="similarity">
    <text evidence="1">Belongs to the thymidylate synthase family. Bacterial-type ThyA subfamily.</text>
</comment>
<organism>
    <name type="scientific">Sinorhizobium medicae (strain WSM419)</name>
    <name type="common">Ensifer medicae</name>
    <dbReference type="NCBI Taxonomy" id="366394"/>
    <lineage>
        <taxon>Bacteria</taxon>
        <taxon>Pseudomonadati</taxon>
        <taxon>Pseudomonadota</taxon>
        <taxon>Alphaproteobacteria</taxon>
        <taxon>Hyphomicrobiales</taxon>
        <taxon>Rhizobiaceae</taxon>
        <taxon>Sinorhizobium/Ensifer group</taxon>
        <taxon>Sinorhizobium</taxon>
    </lineage>
</organism>
<feature type="chain" id="PRO_1000000683" description="Thymidylate synthase">
    <location>
        <begin position="1"/>
        <end position="264"/>
    </location>
</feature>
<feature type="active site" description="Nucleophile" evidence="1">
    <location>
        <position position="146"/>
    </location>
</feature>
<feature type="binding site" description="in other chain" evidence="1">
    <location>
        <position position="21"/>
    </location>
    <ligand>
        <name>dUMP</name>
        <dbReference type="ChEBI" id="CHEBI:246422"/>
        <note>ligand shared between dimeric partners</note>
    </ligand>
</feature>
<feature type="binding site" evidence="1">
    <location>
        <position position="51"/>
    </location>
    <ligand>
        <name>(6R)-5,10-methylene-5,6,7,8-tetrahydrofolate</name>
        <dbReference type="ChEBI" id="CHEBI:15636"/>
    </ligand>
</feature>
<feature type="binding site" evidence="1">
    <location>
        <begin position="126"/>
        <end position="127"/>
    </location>
    <ligand>
        <name>dUMP</name>
        <dbReference type="ChEBI" id="CHEBI:246422"/>
        <note>ligand shared between dimeric partners</note>
    </ligand>
</feature>
<feature type="binding site" description="in other chain" evidence="1">
    <location>
        <begin position="166"/>
        <end position="169"/>
    </location>
    <ligand>
        <name>dUMP</name>
        <dbReference type="ChEBI" id="CHEBI:246422"/>
        <note>ligand shared between dimeric partners</note>
    </ligand>
</feature>
<feature type="binding site" evidence="1">
    <location>
        <position position="169"/>
    </location>
    <ligand>
        <name>(6R)-5,10-methylene-5,6,7,8-tetrahydrofolate</name>
        <dbReference type="ChEBI" id="CHEBI:15636"/>
    </ligand>
</feature>
<feature type="binding site" description="in other chain" evidence="1">
    <location>
        <position position="177"/>
    </location>
    <ligand>
        <name>dUMP</name>
        <dbReference type="ChEBI" id="CHEBI:246422"/>
        <note>ligand shared between dimeric partners</note>
    </ligand>
</feature>
<feature type="binding site" description="in other chain" evidence="1">
    <location>
        <begin position="207"/>
        <end position="209"/>
    </location>
    <ligand>
        <name>dUMP</name>
        <dbReference type="ChEBI" id="CHEBI:246422"/>
        <note>ligand shared between dimeric partners</note>
    </ligand>
</feature>
<feature type="binding site" evidence="1">
    <location>
        <position position="263"/>
    </location>
    <ligand>
        <name>(6R)-5,10-methylene-5,6,7,8-tetrahydrofolate</name>
        <dbReference type="ChEBI" id="CHEBI:15636"/>
    </ligand>
</feature>
<accession>A6UB24</accession>
<dbReference type="EC" id="2.1.1.45" evidence="1"/>
<dbReference type="EMBL" id="CP000738">
    <property type="protein sequence ID" value="ABR60854.1"/>
    <property type="molecule type" value="Genomic_DNA"/>
</dbReference>
<dbReference type="RefSeq" id="WP_011976151.1">
    <property type="nucleotide sequence ID" value="NC_009636.1"/>
</dbReference>
<dbReference type="RefSeq" id="YP_001327689.1">
    <property type="nucleotide sequence ID" value="NC_009636.1"/>
</dbReference>
<dbReference type="SMR" id="A6UB24"/>
<dbReference type="STRING" id="366394.Smed_2021"/>
<dbReference type="KEGG" id="smd:Smed_2021"/>
<dbReference type="PATRIC" id="fig|366394.8.peg.5178"/>
<dbReference type="eggNOG" id="COG0207">
    <property type="taxonomic scope" value="Bacteria"/>
</dbReference>
<dbReference type="HOGENOM" id="CLU_021669_0_0_5"/>
<dbReference type="OrthoDB" id="9774633at2"/>
<dbReference type="UniPathway" id="UPA00575"/>
<dbReference type="Proteomes" id="UP000001108">
    <property type="component" value="Chromosome"/>
</dbReference>
<dbReference type="GO" id="GO:0005829">
    <property type="term" value="C:cytosol"/>
    <property type="evidence" value="ECO:0007669"/>
    <property type="project" value="TreeGrafter"/>
</dbReference>
<dbReference type="GO" id="GO:0004799">
    <property type="term" value="F:thymidylate synthase activity"/>
    <property type="evidence" value="ECO:0007669"/>
    <property type="project" value="UniProtKB-UniRule"/>
</dbReference>
<dbReference type="GO" id="GO:0006231">
    <property type="term" value="P:dTMP biosynthetic process"/>
    <property type="evidence" value="ECO:0007669"/>
    <property type="project" value="UniProtKB-UniRule"/>
</dbReference>
<dbReference type="GO" id="GO:0006235">
    <property type="term" value="P:dTTP biosynthetic process"/>
    <property type="evidence" value="ECO:0007669"/>
    <property type="project" value="UniProtKB-UniRule"/>
</dbReference>
<dbReference type="GO" id="GO:0032259">
    <property type="term" value="P:methylation"/>
    <property type="evidence" value="ECO:0007669"/>
    <property type="project" value="UniProtKB-KW"/>
</dbReference>
<dbReference type="CDD" id="cd00351">
    <property type="entry name" value="TS_Pyrimidine_HMase"/>
    <property type="match status" value="1"/>
</dbReference>
<dbReference type="FunFam" id="3.30.572.10:FF:000001">
    <property type="entry name" value="Thymidylate synthase"/>
    <property type="match status" value="1"/>
</dbReference>
<dbReference type="Gene3D" id="3.30.572.10">
    <property type="entry name" value="Thymidylate synthase/dCMP hydroxymethylase domain"/>
    <property type="match status" value="1"/>
</dbReference>
<dbReference type="HAMAP" id="MF_00008">
    <property type="entry name" value="Thymidy_synth_bact"/>
    <property type="match status" value="1"/>
</dbReference>
<dbReference type="InterPro" id="IPR045097">
    <property type="entry name" value="Thymidate_synth/dCMP_Mease"/>
</dbReference>
<dbReference type="InterPro" id="IPR023451">
    <property type="entry name" value="Thymidate_synth/dCMP_Mease_dom"/>
</dbReference>
<dbReference type="InterPro" id="IPR036926">
    <property type="entry name" value="Thymidate_synth/dCMP_Mease_sf"/>
</dbReference>
<dbReference type="InterPro" id="IPR000398">
    <property type="entry name" value="Thymidylate_synthase"/>
</dbReference>
<dbReference type="InterPro" id="IPR020940">
    <property type="entry name" value="Thymidylate_synthase_AS"/>
</dbReference>
<dbReference type="NCBIfam" id="NF002497">
    <property type="entry name" value="PRK01827.1-3"/>
    <property type="match status" value="1"/>
</dbReference>
<dbReference type="NCBIfam" id="NF002499">
    <property type="entry name" value="PRK01827.1-5"/>
    <property type="match status" value="1"/>
</dbReference>
<dbReference type="NCBIfam" id="TIGR03284">
    <property type="entry name" value="thym_sym"/>
    <property type="match status" value="2"/>
</dbReference>
<dbReference type="PANTHER" id="PTHR11548:SF9">
    <property type="entry name" value="THYMIDYLATE SYNTHASE"/>
    <property type="match status" value="1"/>
</dbReference>
<dbReference type="PANTHER" id="PTHR11548">
    <property type="entry name" value="THYMIDYLATE SYNTHASE 1"/>
    <property type="match status" value="1"/>
</dbReference>
<dbReference type="Pfam" id="PF00303">
    <property type="entry name" value="Thymidylat_synt"/>
    <property type="match status" value="1"/>
</dbReference>
<dbReference type="PRINTS" id="PR00108">
    <property type="entry name" value="THYMDSNTHASE"/>
</dbReference>
<dbReference type="SUPFAM" id="SSF55831">
    <property type="entry name" value="Thymidylate synthase/dCMP hydroxymethylase"/>
    <property type="match status" value="1"/>
</dbReference>
<dbReference type="PROSITE" id="PS00091">
    <property type="entry name" value="THYMIDYLATE_SYNTHASE"/>
    <property type="match status" value="1"/>
</dbReference>
<protein>
    <recommendedName>
        <fullName evidence="1">Thymidylate synthase</fullName>
        <shortName evidence="1">TS</shortName>
        <shortName evidence="1">TSase</shortName>
        <ecNumber evidence="1">2.1.1.45</ecNumber>
    </recommendedName>
</protein>
<sequence length="264" mass="30026">MRQYLDLLEHVIETGTDRGDRTGTGTRSVFGYQMRFDLSQGFPVLTTKKLHLRSIIHELLWFLKGDTNIAYLKEHGVRIWDEWADENGDLGPVYGYQWRSWPTPDGGHIDQIATLVEGLKTNPNSRRHIVSAWNPALVDDMALPPCHCLFQFYVADGKLSCQLYQRSGDIFLGVPFNIASYALLTMMVAQVTGLEAGDFVHTLGDAHIYRNHFEQAQLQLTRTPKPLPRMEINPAVKDLFSFRFEDFELTGYEADSHIKAPVAV</sequence>
<reference key="1">
    <citation type="submission" date="2007-06" db="EMBL/GenBank/DDBJ databases">
        <title>Complete sequence of Sinorhizobium medicae WSM419 chromosome.</title>
        <authorList>
            <consortium name="US DOE Joint Genome Institute"/>
            <person name="Copeland A."/>
            <person name="Lucas S."/>
            <person name="Lapidus A."/>
            <person name="Barry K."/>
            <person name="Glavina del Rio T."/>
            <person name="Dalin E."/>
            <person name="Tice H."/>
            <person name="Pitluck S."/>
            <person name="Chain P."/>
            <person name="Malfatti S."/>
            <person name="Shin M."/>
            <person name="Vergez L."/>
            <person name="Schmutz J."/>
            <person name="Larimer F."/>
            <person name="Land M."/>
            <person name="Hauser L."/>
            <person name="Kyrpides N."/>
            <person name="Mikhailova N."/>
            <person name="Reeve W.G."/>
            <person name="Richardson P."/>
        </authorList>
    </citation>
    <scope>NUCLEOTIDE SEQUENCE [LARGE SCALE GENOMIC DNA]</scope>
    <source>
        <strain>WSM419</strain>
    </source>
</reference>
<gene>
    <name evidence="1" type="primary">thyA</name>
    <name type="ordered locus">Smed_2021</name>
</gene>
<name>TYSY_SINMW</name>
<proteinExistence type="inferred from homology"/>
<keyword id="KW-0963">Cytoplasm</keyword>
<keyword id="KW-0489">Methyltransferase</keyword>
<keyword id="KW-0545">Nucleotide biosynthesis</keyword>
<keyword id="KW-0808">Transferase</keyword>